<gene>
    <name type="primary">stiI</name>
</gene>
<evidence type="ECO:0007829" key="1">
    <source>
        <dbReference type="PDB" id="1EHS"/>
    </source>
</evidence>
<feature type="signal peptide">
    <location>
        <begin position="1"/>
        <end position="23"/>
    </location>
</feature>
<feature type="chain" id="PRO_0000035132" description="Heat-stable enterotoxin II">
    <location>
        <begin position="24"/>
        <end position="71"/>
    </location>
</feature>
<feature type="disulfide bond">
    <location>
        <begin position="33"/>
        <end position="71"/>
    </location>
</feature>
<feature type="disulfide bond">
    <location>
        <begin position="44"/>
        <end position="59"/>
    </location>
</feature>
<feature type="helix" evidence="1">
    <location>
        <begin position="33"/>
        <end position="45"/>
    </location>
</feature>
<feature type="strand" evidence="1">
    <location>
        <begin position="48"/>
        <end position="55"/>
    </location>
</feature>
<feature type="turn" evidence="1">
    <location>
        <begin position="58"/>
        <end position="62"/>
    </location>
</feature>
<feature type="helix" evidence="1">
    <location>
        <begin position="63"/>
        <end position="66"/>
    </location>
</feature>
<feature type="turn" evidence="1">
    <location>
        <begin position="67"/>
        <end position="69"/>
    </location>
</feature>
<proteinExistence type="evidence at protein level"/>
<keyword id="KW-0002">3D-structure</keyword>
<keyword id="KW-1015">Disulfide bond</keyword>
<keyword id="KW-0260">Enterotoxin</keyword>
<keyword id="KW-0964">Secreted</keyword>
<keyword id="KW-0732">Signal</keyword>
<keyword id="KW-0800">Toxin</keyword>
<keyword id="KW-0843">Virulence</keyword>
<name>HSTI_ECOLX</name>
<accession>P22542</accession>
<sequence length="71" mass="7642">MKKNIAFLLASMFVFSIATNAYASTQSNKKDLCEHYRQIAKESCKKGFLGVRDGTAGACFGAQIMVAAKGC</sequence>
<organism>
    <name type="scientific">Escherichia coli</name>
    <dbReference type="NCBI Taxonomy" id="562"/>
    <lineage>
        <taxon>Bacteria</taxon>
        <taxon>Pseudomonadati</taxon>
        <taxon>Pseudomonadota</taxon>
        <taxon>Gammaproteobacteria</taxon>
        <taxon>Enterobacterales</taxon>
        <taxon>Enterobacteriaceae</taxon>
        <taxon>Escherichia</taxon>
    </lineage>
</organism>
<protein>
    <recommendedName>
        <fullName>Heat-stable enterotoxin II</fullName>
        <shortName>STII</shortName>
    </recommendedName>
    <alternativeName>
        <fullName>Enterotoxin B</fullName>
    </alternativeName>
    <alternativeName>
        <fullName>ST-B</fullName>
    </alternativeName>
</protein>
<comment type="function">
    <text>Toxin which activates the particulate form of guanylate cyclase and increases cyclic GMP levels within the host intestinal epithelial cells.</text>
</comment>
<comment type="subcellular location">
    <subcellularLocation>
        <location>Secreted</location>
    </subcellularLocation>
</comment>
<dbReference type="EMBL" id="M35729">
    <property type="protein sequence ID" value="AAA23989.1"/>
    <property type="molecule type" value="Genomic_DNA"/>
</dbReference>
<dbReference type="EMBL" id="M35586">
    <property type="protein sequence ID" value="AAA24655.1"/>
    <property type="molecule type" value="Genomic_DNA"/>
</dbReference>
<dbReference type="PIR" id="A33065">
    <property type="entry name" value="A33065"/>
</dbReference>
<dbReference type="PDB" id="1EHS">
    <property type="method" value="NMR"/>
    <property type="chains" value="A=24-71"/>
</dbReference>
<dbReference type="PDBsum" id="1EHS"/>
<dbReference type="SMR" id="P22542"/>
<dbReference type="KEGG" id="ag:AAA23989"/>
<dbReference type="EvolutionaryTrace" id="P22542"/>
<dbReference type="GO" id="GO:0005576">
    <property type="term" value="C:extracellular region"/>
    <property type="evidence" value="ECO:0007669"/>
    <property type="project" value="UniProtKB-SubCell"/>
</dbReference>
<dbReference type="GO" id="GO:0090729">
    <property type="term" value="F:toxin activity"/>
    <property type="evidence" value="ECO:0007669"/>
    <property type="project" value="UniProtKB-KW"/>
</dbReference>
<dbReference type="Gene3D" id="1.20.10.10">
    <property type="entry name" value="Heat-stable enterotoxin B"/>
    <property type="match status" value="1"/>
</dbReference>
<dbReference type="InterPro" id="IPR015160">
    <property type="entry name" value="STb_secrete"/>
</dbReference>
<dbReference type="InterPro" id="IPR036479">
    <property type="entry name" value="STb_sf"/>
</dbReference>
<dbReference type="Pfam" id="PF09075">
    <property type="entry name" value="STb_secrete"/>
    <property type="match status" value="1"/>
</dbReference>
<dbReference type="SUPFAM" id="SSF57007">
    <property type="entry name" value="Heat-stable enterotoxin B"/>
    <property type="match status" value="1"/>
</dbReference>
<reference key="1">
    <citation type="journal article" date="1983" name="Infect. Immun.">
        <title>Nucleotide sequence of the gene for heat-stable enterotoxin II of Escherichia coli.</title>
        <authorList>
            <person name="Picken R.N."/>
            <person name="Mazaitis A.J."/>
            <person name="Maas W.K."/>
            <person name="Rey M."/>
            <person name="Heyneker H."/>
        </authorList>
    </citation>
    <scope>NUCLEOTIDE SEQUENCE [GENOMIC DNA]</scope>
</reference>
<reference key="2">
    <citation type="journal article" date="1983" name="Infect. Immun.">
        <title>Characterization of the gene encoding heat-stable toxin II and preliminary molecular epidemiological studies of enterotoxigenic Escherichia coli heat-stable toxin II producers.</title>
        <authorList>
            <person name="Lee C.H."/>
            <person name="Moseley S.L."/>
            <person name="Moon H.W."/>
            <person name="Whipp S.C."/>
            <person name="Gyles C.L."/>
            <person name="So M."/>
        </authorList>
    </citation>
    <scope>NUCLEOTIDE SEQUENCE [GENOMIC DNA]</scope>
    <source>
        <strain>711</strain>
    </source>
</reference>
<reference key="3">
    <citation type="journal article" date="1995" name="Protein Sci.">
        <title>The structure of Escherichia coli heat-stable enterotoxin b by nuclear magnetic resonance and circular dichroism.</title>
        <authorList>
            <person name="Sukumar M."/>
            <person name="Rizo J."/>
            <person name="Wall M."/>
            <person name="Dreyfus L.A."/>
            <person name="Kupersztoch Y.M."/>
            <person name="Gierasch L.M."/>
        </authorList>
    </citation>
    <scope>STRUCTURE BY NMR</scope>
</reference>